<evidence type="ECO:0000250" key="1"/>
<evidence type="ECO:0000255" key="2"/>
<evidence type="ECO:0000256" key="3">
    <source>
        <dbReference type="SAM" id="MobiDB-lite"/>
    </source>
</evidence>
<evidence type="ECO:0000305" key="4"/>
<keyword id="KW-0551">Lipid droplet</keyword>
<keyword id="KW-0472">Membrane</keyword>
<keyword id="KW-1185">Reference proteome</keyword>
<keyword id="KW-0812">Transmembrane</keyword>
<keyword id="KW-1133">Transmembrane helix</keyword>
<proteinExistence type="evidence at transcript level"/>
<gene>
    <name type="ordered locus">At3g01570</name>
    <name type="ORF">F4P13.12</name>
</gene>
<dbReference type="EMBL" id="AC009325">
    <property type="protein sequence ID" value="AAF01542.1"/>
    <property type="molecule type" value="Genomic_DNA"/>
</dbReference>
<dbReference type="EMBL" id="CP002686">
    <property type="protein sequence ID" value="AEE73689.1"/>
    <property type="molecule type" value="Genomic_DNA"/>
</dbReference>
<dbReference type="EMBL" id="AY059936">
    <property type="protein sequence ID" value="AAL24418.1"/>
    <property type="molecule type" value="mRNA"/>
</dbReference>
<dbReference type="EMBL" id="AY081655">
    <property type="protein sequence ID" value="AAM10217.1"/>
    <property type="molecule type" value="mRNA"/>
</dbReference>
<dbReference type="RefSeq" id="NP_186806.1">
    <property type="nucleotide sequence ID" value="NM_111023.3"/>
</dbReference>
<dbReference type="SMR" id="Q9SS98"/>
<dbReference type="BioGRID" id="6439">
    <property type="interactions" value="3"/>
</dbReference>
<dbReference type="FunCoup" id="Q9SS98">
    <property type="interactions" value="77"/>
</dbReference>
<dbReference type="IntAct" id="Q9SS98">
    <property type="interactions" value="1"/>
</dbReference>
<dbReference type="STRING" id="3702.Q9SS98"/>
<dbReference type="PaxDb" id="3702-AT3G01570.1"/>
<dbReference type="ProteomicsDB" id="250966"/>
<dbReference type="EnsemblPlants" id="AT3G01570.1">
    <property type="protein sequence ID" value="AT3G01570.1"/>
    <property type="gene ID" value="AT3G01570"/>
</dbReference>
<dbReference type="GeneID" id="821106"/>
<dbReference type="Gramene" id="AT3G01570.1">
    <property type="protein sequence ID" value="AT3G01570.1"/>
    <property type="gene ID" value="AT3G01570"/>
</dbReference>
<dbReference type="KEGG" id="ath:AT3G01570"/>
<dbReference type="Araport" id="AT3G01570"/>
<dbReference type="TAIR" id="AT3G01570"/>
<dbReference type="eggNOG" id="ENOG502S1R0">
    <property type="taxonomic scope" value="Eukaryota"/>
</dbReference>
<dbReference type="HOGENOM" id="CLU_101983_1_1_1"/>
<dbReference type="InParanoid" id="Q9SS98"/>
<dbReference type="OMA" id="MSWVLNY"/>
<dbReference type="OrthoDB" id="1929188at2759"/>
<dbReference type="PhylomeDB" id="Q9SS98"/>
<dbReference type="PRO" id="PR:Q9SS98"/>
<dbReference type="Proteomes" id="UP000006548">
    <property type="component" value="Chromosome 3"/>
</dbReference>
<dbReference type="ExpressionAtlas" id="Q9SS98">
    <property type="expression patterns" value="baseline and differential"/>
</dbReference>
<dbReference type="GO" id="GO:0016020">
    <property type="term" value="C:membrane"/>
    <property type="evidence" value="ECO:0007669"/>
    <property type="project" value="UniProtKB-SubCell"/>
</dbReference>
<dbReference type="GO" id="GO:0012511">
    <property type="term" value="C:monolayer-surrounded lipid storage body"/>
    <property type="evidence" value="ECO:0007669"/>
    <property type="project" value="InterPro"/>
</dbReference>
<dbReference type="GO" id="GO:0009791">
    <property type="term" value="P:post-embryonic development"/>
    <property type="evidence" value="ECO:0007669"/>
    <property type="project" value="UniProtKB-ARBA"/>
</dbReference>
<dbReference type="GO" id="GO:0048608">
    <property type="term" value="P:reproductive structure development"/>
    <property type="evidence" value="ECO:0007669"/>
    <property type="project" value="UniProtKB-ARBA"/>
</dbReference>
<dbReference type="InterPro" id="IPR000136">
    <property type="entry name" value="Oleosin"/>
</dbReference>
<dbReference type="PANTHER" id="PTHR33203">
    <property type="entry name" value="OLEOSIN"/>
    <property type="match status" value="1"/>
</dbReference>
<dbReference type="PANTHER" id="PTHR33203:SF61">
    <property type="entry name" value="OLEOSIN 5"/>
    <property type="match status" value="1"/>
</dbReference>
<dbReference type="Pfam" id="PF01277">
    <property type="entry name" value="Oleosin"/>
    <property type="match status" value="1"/>
</dbReference>
<dbReference type="PROSITE" id="PS00811">
    <property type="entry name" value="OLEOSINS"/>
    <property type="match status" value="1"/>
</dbReference>
<name>OLEO5_ARATH</name>
<accession>Q9SS98</accession>
<reference key="1">
    <citation type="journal article" date="2000" name="Nature">
        <title>Sequence and analysis of chromosome 3 of the plant Arabidopsis thaliana.</title>
        <authorList>
            <person name="Salanoubat M."/>
            <person name="Lemcke K."/>
            <person name="Rieger M."/>
            <person name="Ansorge W."/>
            <person name="Unseld M."/>
            <person name="Fartmann B."/>
            <person name="Valle G."/>
            <person name="Bloecker H."/>
            <person name="Perez-Alonso M."/>
            <person name="Obermaier B."/>
            <person name="Delseny M."/>
            <person name="Boutry M."/>
            <person name="Grivell L.A."/>
            <person name="Mache R."/>
            <person name="Puigdomenech P."/>
            <person name="De Simone V."/>
            <person name="Choisne N."/>
            <person name="Artiguenave F."/>
            <person name="Robert C."/>
            <person name="Brottier P."/>
            <person name="Wincker P."/>
            <person name="Cattolico L."/>
            <person name="Weissenbach J."/>
            <person name="Saurin W."/>
            <person name="Quetier F."/>
            <person name="Schaefer M."/>
            <person name="Mueller-Auer S."/>
            <person name="Gabel C."/>
            <person name="Fuchs M."/>
            <person name="Benes V."/>
            <person name="Wurmbach E."/>
            <person name="Drzonek H."/>
            <person name="Erfle H."/>
            <person name="Jordan N."/>
            <person name="Bangert S."/>
            <person name="Wiedelmann R."/>
            <person name="Kranz H."/>
            <person name="Voss H."/>
            <person name="Holland R."/>
            <person name="Brandt P."/>
            <person name="Nyakatura G."/>
            <person name="Vezzi A."/>
            <person name="D'Angelo M."/>
            <person name="Pallavicini A."/>
            <person name="Toppo S."/>
            <person name="Simionati B."/>
            <person name="Conrad A."/>
            <person name="Hornischer K."/>
            <person name="Kauer G."/>
            <person name="Loehnert T.-H."/>
            <person name="Nordsiek G."/>
            <person name="Reichelt J."/>
            <person name="Scharfe M."/>
            <person name="Schoen O."/>
            <person name="Bargues M."/>
            <person name="Terol J."/>
            <person name="Climent J."/>
            <person name="Navarro P."/>
            <person name="Collado C."/>
            <person name="Perez-Perez A."/>
            <person name="Ottenwaelder B."/>
            <person name="Duchemin D."/>
            <person name="Cooke R."/>
            <person name="Laudie M."/>
            <person name="Berger-Llauro C."/>
            <person name="Purnelle B."/>
            <person name="Masuy D."/>
            <person name="de Haan M."/>
            <person name="Maarse A.C."/>
            <person name="Alcaraz J.-P."/>
            <person name="Cottet A."/>
            <person name="Casacuberta E."/>
            <person name="Monfort A."/>
            <person name="Argiriou A."/>
            <person name="Flores M."/>
            <person name="Liguori R."/>
            <person name="Vitale D."/>
            <person name="Mannhaupt G."/>
            <person name="Haase D."/>
            <person name="Schoof H."/>
            <person name="Rudd S."/>
            <person name="Zaccaria P."/>
            <person name="Mewes H.-W."/>
            <person name="Mayer K.F.X."/>
            <person name="Kaul S."/>
            <person name="Town C.D."/>
            <person name="Koo H.L."/>
            <person name="Tallon L.J."/>
            <person name="Jenkins J."/>
            <person name="Rooney T."/>
            <person name="Rizzo M."/>
            <person name="Walts A."/>
            <person name="Utterback T."/>
            <person name="Fujii C.Y."/>
            <person name="Shea T.P."/>
            <person name="Creasy T.H."/>
            <person name="Haas B."/>
            <person name="Maiti R."/>
            <person name="Wu D."/>
            <person name="Peterson J."/>
            <person name="Van Aken S."/>
            <person name="Pai G."/>
            <person name="Militscher J."/>
            <person name="Sellers P."/>
            <person name="Gill J.E."/>
            <person name="Feldblyum T.V."/>
            <person name="Preuss D."/>
            <person name="Lin X."/>
            <person name="Nierman W.C."/>
            <person name="Salzberg S.L."/>
            <person name="White O."/>
            <person name="Venter J.C."/>
            <person name="Fraser C.M."/>
            <person name="Kaneko T."/>
            <person name="Nakamura Y."/>
            <person name="Sato S."/>
            <person name="Kato T."/>
            <person name="Asamizu E."/>
            <person name="Sasamoto S."/>
            <person name="Kimura T."/>
            <person name="Idesawa K."/>
            <person name="Kawashima K."/>
            <person name="Kishida Y."/>
            <person name="Kiyokawa C."/>
            <person name="Kohara M."/>
            <person name="Matsumoto M."/>
            <person name="Matsuno A."/>
            <person name="Muraki A."/>
            <person name="Nakayama S."/>
            <person name="Nakazaki N."/>
            <person name="Shinpo S."/>
            <person name="Takeuchi C."/>
            <person name="Wada T."/>
            <person name="Watanabe A."/>
            <person name="Yamada M."/>
            <person name="Yasuda M."/>
            <person name="Tabata S."/>
        </authorList>
    </citation>
    <scope>NUCLEOTIDE SEQUENCE [LARGE SCALE GENOMIC DNA]</scope>
    <source>
        <strain>cv. Columbia</strain>
    </source>
</reference>
<reference key="2">
    <citation type="journal article" date="2017" name="Plant J.">
        <title>Araport11: a complete reannotation of the Arabidopsis thaliana reference genome.</title>
        <authorList>
            <person name="Cheng C.Y."/>
            <person name="Krishnakumar V."/>
            <person name="Chan A.P."/>
            <person name="Thibaud-Nissen F."/>
            <person name="Schobel S."/>
            <person name="Town C.D."/>
        </authorList>
    </citation>
    <scope>GENOME REANNOTATION</scope>
    <source>
        <strain>cv. Columbia</strain>
    </source>
</reference>
<reference key="3">
    <citation type="journal article" date="2003" name="Science">
        <title>Empirical analysis of transcriptional activity in the Arabidopsis genome.</title>
        <authorList>
            <person name="Yamada K."/>
            <person name="Lim J."/>
            <person name="Dale J.M."/>
            <person name="Chen H."/>
            <person name="Shinn P."/>
            <person name="Palm C.J."/>
            <person name="Southwick A.M."/>
            <person name="Wu H.C."/>
            <person name="Kim C.J."/>
            <person name="Nguyen M."/>
            <person name="Pham P.K."/>
            <person name="Cheuk R.F."/>
            <person name="Karlin-Newmann G."/>
            <person name="Liu S.X."/>
            <person name="Lam B."/>
            <person name="Sakano H."/>
            <person name="Wu T."/>
            <person name="Yu G."/>
            <person name="Miranda M."/>
            <person name="Quach H.L."/>
            <person name="Tripp M."/>
            <person name="Chang C.H."/>
            <person name="Lee J.M."/>
            <person name="Toriumi M.J."/>
            <person name="Chan M.M."/>
            <person name="Tang C.C."/>
            <person name="Onodera C.S."/>
            <person name="Deng J.M."/>
            <person name="Akiyama K."/>
            <person name="Ansari Y."/>
            <person name="Arakawa T."/>
            <person name="Banh J."/>
            <person name="Banno F."/>
            <person name="Bowser L."/>
            <person name="Brooks S.Y."/>
            <person name="Carninci P."/>
            <person name="Chao Q."/>
            <person name="Choy N."/>
            <person name="Enju A."/>
            <person name="Goldsmith A.D."/>
            <person name="Gurjal M."/>
            <person name="Hansen N.F."/>
            <person name="Hayashizaki Y."/>
            <person name="Johnson-Hopson C."/>
            <person name="Hsuan V.W."/>
            <person name="Iida K."/>
            <person name="Karnes M."/>
            <person name="Khan S."/>
            <person name="Koesema E."/>
            <person name="Ishida J."/>
            <person name="Jiang P.X."/>
            <person name="Jones T."/>
            <person name="Kawai J."/>
            <person name="Kamiya A."/>
            <person name="Meyers C."/>
            <person name="Nakajima M."/>
            <person name="Narusaka M."/>
            <person name="Seki M."/>
            <person name="Sakurai T."/>
            <person name="Satou M."/>
            <person name="Tamse R."/>
            <person name="Vaysberg M."/>
            <person name="Wallender E.K."/>
            <person name="Wong C."/>
            <person name="Yamamura Y."/>
            <person name="Yuan S."/>
            <person name="Shinozaki K."/>
            <person name="Davis R.W."/>
            <person name="Theologis A."/>
            <person name="Ecker J.R."/>
        </authorList>
    </citation>
    <scope>NUCLEOTIDE SEQUENCE [LARGE SCALE MRNA]</scope>
    <source>
        <strain>cv. Columbia</strain>
    </source>
</reference>
<sequence>MADVRTHSHQLQVHPQRQHEGGIKVLYPQSGPSSTQVLAVFVGVPIGGTLLTIAGLTLAGSVIGLMLAFPLFLIFSPVIVPAAFVIGLAMTGFLASGAIGLTGLSSMSWVLNYIRRAGQHIPEELEEAKHRLADMAEYVGQRTKDAGQTIEDKAHDVREAKTFDVRDRDTTKGTHNVRDTKTT</sequence>
<organism>
    <name type="scientific">Arabidopsis thaliana</name>
    <name type="common">Mouse-ear cress</name>
    <dbReference type="NCBI Taxonomy" id="3702"/>
    <lineage>
        <taxon>Eukaryota</taxon>
        <taxon>Viridiplantae</taxon>
        <taxon>Streptophyta</taxon>
        <taxon>Embryophyta</taxon>
        <taxon>Tracheophyta</taxon>
        <taxon>Spermatophyta</taxon>
        <taxon>Magnoliopsida</taxon>
        <taxon>eudicotyledons</taxon>
        <taxon>Gunneridae</taxon>
        <taxon>Pentapetalae</taxon>
        <taxon>rosids</taxon>
        <taxon>malvids</taxon>
        <taxon>Brassicales</taxon>
        <taxon>Brassicaceae</taxon>
        <taxon>Camelineae</taxon>
        <taxon>Arabidopsis</taxon>
    </lineage>
</organism>
<feature type="chain" id="PRO_0000108131" description="Oleosin 5">
    <location>
        <begin position="1"/>
        <end position="183"/>
    </location>
</feature>
<feature type="transmembrane region" description="Helical" evidence="2">
    <location>
        <begin position="37"/>
        <end position="57"/>
    </location>
</feature>
<feature type="transmembrane region" description="Helical" evidence="2">
    <location>
        <begin position="66"/>
        <end position="86"/>
    </location>
</feature>
<feature type="transmembrane region" description="Helical" evidence="2">
    <location>
        <begin position="87"/>
        <end position="107"/>
    </location>
</feature>
<feature type="region of interest" description="Polar" evidence="1">
    <location>
        <begin position="1"/>
        <end position="39"/>
    </location>
</feature>
<feature type="region of interest" description="Hydrophobic" evidence="1">
    <location>
        <begin position="40"/>
        <end position="113"/>
    </location>
</feature>
<feature type="region of interest" description="Disordered" evidence="3">
    <location>
        <begin position="144"/>
        <end position="183"/>
    </location>
</feature>
<comment type="function">
    <text evidence="1">May have a structural role to stabilize the lipid body during desiccation of the seed by preventing coalescence of the oil. Probably interacts with both lipid and phospholipid moieties of lipid bodies. May also provide recognition signals for specific lipase anchorage in lipolysis during seedling growth (By similarity).</text>
</comment>
<comment type="subcellular location">
    <subcellularLocation>
        <location evidence="1">Lipid droplet</location>
    </subcellularLocation>
    <subcellularLocation>
        <location evidence="1">Membrane</location>
        <topology evidence="1">Multi-pass membrane protein</topology>
    </subcellularLocation>
    <text evidence="1">Surface of oil bodies. Oleosins exist at a monolayer lipid/water interface (By similarity).</text>
</comment>
<comment type="similarity">
    <text evidence="4">Belongs to the oleosin family.</text>
</comment>
<protein>
    <recommendedName>
        <fullName>Oleosin 5</fullName>
    </recommendedName>
</protein>